<protein>
    <recommendedName>
        <fullName>ATPase synthesis protein 25, mitochondrial</fullName>
    </recommendedName>
</protein>
<gene>
    <name type="primary">ATP25</name>
    <name type="ordered locus">PAS_chr1-4_0638</name>
</gene>
<accession>C4QZ25</accession>
<dbReference type="EMBL" id="FN392319">
    <property type="protein sequence ID" value="CAY68499.1"/>
    <property type="molecule type" value="Genomic_DNA"/>
</dbReference>
<dbReference type="RefSeq" id="XP_002490779.1">
    <property type="nucleotide sequence ID" value="XM_002490734.1"/>
</dbReference>
<dbReference type="SMR" id="C4QZ25"/>
<dbReference type="FunCoup" id="C4QZ25">
    <property type="interactions" value="79"/>
</dbReference>
<dbReference type="STRING" id="644223.C4QZ25"/>
<dbReference type="EnsemblFungi" id="CAY68499">
    <property type="protein sequence ID" value="CAY68499"/>
    <property type="gene ID" value="PAS_chr1-4_0638"/>
</dbReference>
<dbReference type="GeneID" id="8197846"/>
<dbReference type="KEGG" id="ppa:PAS_chr1-4_0638"/>
<dbReference type="eggNOG" id="ENOG502RGZN">
    <property type="taxonomic scope" value="Eukaryota"/>
</dbReference>
<dbReference type="HOGENOM" id="CLU_454918_0_0_1"/>
<dbReference type="InParanoid" id="C4QZ25"/>
<dbReference type="OrthoDB" id="107372at2759"/>
<dbReference type="Proteomes" id="UP000000314">
    <property type="component" value="Chromosome 1"/>
</dbReference>
<dbReference type="GO" id="GO:0005743">
    <property type="term" value="C:mitochondrial inner membrane"/>
    <property type="evidence" value="ECO:0007669"/>
    <property type="project" value="UniProtKB-SubCell"/>
</dbReference>
<dbReference type="GO" id="GO:0140053">
    <property type="term" value="P:mitochondrial gene expression"/>
    <property type="evidence" value="ECO:0007669"/>
    <property type="project" value="InterPro"/>
</dbReference>
<dbReference type="GO" id="GO:0048255">
    <property type="term" value="P:mRNA stabilization"/>
    <property type="evidence" value="ECO:0007669"/>
    <property type="project" value="InterPro"/>
</dbReference>
<dbReference type="Gene3D" id="3.30.460.10">
    <property type="entry name" value="Beta Polymerase, domain 2"/>
    <property type="match status" value="1"/>
</dbReference>
<dbReference type="InterPro" id="IPR040152">
    <property type="entry name" value="Atp25"/>
</dbReference>
<dbReference type="InterPro" id="IPR025210">
    <property type="entry name" value="ATP25_mRNA_stabil_dom"/>
</dbReference>
<dbReference type="InterPro" id="IPR043519">
    <property type="entry name" value="NT_sf"/>
</dbReference>
<dbReference type="PANTHER" id="PTHR28087">
    <property type="entry name" value="ATPASE SYNTHESIS PROTEIN 25, MITOCHONDRIAL"/>
    <property type="match status" value="1"/>
</dbReference>
<dbReference type="PANTHER" id="PTHR28087:SF1">
    <property type="entry name" value="ATPASE SYNTHESIS PROTEIN 25, MITOCHONDRIAL"/>
    <property type="match status" value="1"/>
</dbReference>
<dbReference type="Pfam" id="PF13929">
    <property type="entry name" value="mRNA_stabil"/>
    <property type="match status" value="2"/>
</dbReference>
<dbReference type="Pfam" id="PF02410">
    <property type="entry name" value="RsfS"/>
    <property type="match status" value="1"/>
</dbReference>
<dbReference type="SUPFAM" id="SSF81301">
    <property type="entry name" value="Nucleotidyltransferase"/>
    <property type="match status" value="1"/>
</dbReference>
<sequence length="634" mass="72342">MLRSLKPVTAFALKRSLLSIKQVHGTQSVLRSPVRNSSSISSADEDPNLPWYLRTETKVAKPIEMPELPESSPQKLHELVKYFIKDLGIEDIKVFDLSMNEEEEVDGSKFLGKYMVIGTGKSNKHLAKAGTEMMNFLKHEYGTPSSNIEGLVKDTLLIRQQKRLKRKGGKLSSPQSNDFGVSANSWIMIDTNIDDIYVHFLTEKRRKELNLEYLWCSAEDRPLYHQEVATTQSDDIFSGIRNYHTSSRTSRTYGVSRPQHLPSFTRSYSSTPSINELVHLSESGSYQEISKFTNHNDPEVTQLILLSHINFFQNLPLNKAIAHADELYKSFEAAFPAFDASSDHWKIRYLFLDMMHKVDKSRWSFSIIENNFYGKSSHGHRLTEEDLKYFIKSVIESPELSNRYLDPNSNYDHDSTPFKDEGSESFVSISNNKLGKIAKFIQLCYPDLPEGNVFNHFESWDSTVLPLLLTVVSQTTHENFITPVKLSELSSPIANHKPVPYNKTHLDALLEVIRVSQPNFLLNDETRMNFIFILTILANAHEWERVYKLWDAALENSVPINPGSTFKPDTRPWAYLIDLVAKIGDPANARVFLQKRWPQMIHNGIDATDPKIGTATAVLLKVADPENVLFKNVK</sequence>
<feature type="transit peptide" description="Mitochondrion" evidence="2">
    <location>
        <begin position="1"/>
        <end position="36"/>
    </location>
</feature>
<feature type="chain" id="PRO_0000404485" description="ATPase synthesis protein 25, mitochondrial">
    <location>
        <begin position="37"/>
        <end position="634"/>
    </location>
</feature>
<name>ATP25_KOMPG</name>
<reference key="1">
    <citation type="journal article" date="2009" name="Nat. Biotechnol.">
        <title>Genome sequence of the recombinant protein production host Pichia pastoris.</title>
        <authorList>
            <person name="De Schutter K."/>
            <person name="Lin Y.-C."/>
            <person name="Tiels P."/>
            <person name="Van Hecke A."/>
            <person name="Glinka S."/>
            <person name="Weber-Lehmann J."/>
            <person name="Rouze P."/>
            <person name="Van de Peer Y."/>
            <person name="Callewaert N."/>
        </authorList>
    </citation>
    <scope>NUCLEOTIDE SEQUENCE [LARGE SCALE GENOMIC DNA]</scope>
    <source>
        <strain>GS115 / ATCC 20864</strain>
    </source>
</reference>
<organism>
    <name type="scientific">Komagataella phaffii (strain GS115 / ATCC 20864)</name>
    <name type="common">Yeast</name>
    <name type="synonym">Pichia pastoris</name>
    <dbReference type="NCBI Taxonomy" id="644223"/>
    <lineage>
        <taxon>Eukaryota</taxon>
        <taxon>Fungi</taxon>
        <taxon>Dikarya</taxon>
        <taxon>Ascomycota</taxon>
        <taxon>Saccharomycotina</taxon>
        <taxon>Pichiomycetes</taxon>
        <taxon>Pichiales</taxon>
        <taxon>Pichiaceae</taxon>
        <taxon>Komagataella</taxon>
    </lineage>
</organism>
<comment type="function">
    <text evidence="1">Probable mitochondrial mRNA stabilization factor.</text>
</comment>
<comment type="subcellular location">
    <subcellularLocation>
        <location evidence="1">Mitochondrion inner membrane</location>
        <topology evidence="1">Peripheral membrane protein</topology>
        <orientation evidence="1">Matrix side</orientation>
    </subcellularLocation>
</comment>
<comment type="similarity">
    <text evidence="3">Belongs to the ATP25 family.</text>
</comment>
<evidence type="ECO:0000250" key="1"/>
<evidence type="ECO:0000255" key="2"/>
<evidence type="ECO:0000305" key="3"/>
<proteinExistence type="inferred from homology"/>
<keyword id="KW-0472">Membrane</keyword>
<keyword id="KW-0496">Mitochondrion</keyword>
<keyword id="KW-0999">Mitochondrion inner membrane</keyword>
<keyword id="KW-1185">Reference proteome</keyword>
<keyword id="KW-0809">Transit peptide</keyword>